<keyword id="KW-1185">Reference proteome</keyword>
<keyword id="KW-0687">Ribonucleoprotein</keyword>
<keyword id="KW-0689">Ribosomal protein</keyword>
<feature type="chain" id="PRO_0000122281" description="Small ribosomal subunit protein eS8">
    <location>
        <begin position="1"/>
        <end position="128"/>
    </location>
</feature>
<feature type="region of interest" description="Disordered" evidence="2">
    <location>
        <begin position="1"/>
        <end position="37"/>
    </location>
</feature>
<feature type="compositionally biased region" description="Basic residues" evidence="2">
    <location>
        <begin position="13"/>
        <end position="23"/>
    </location>
</feature>
<name>RS8E_SULTO</name>
<proteinExistence type="inferred from homology"/>
<protein>
    <recommendedName>
        <fullName evidence="1">Small ribosomal subunit protein eS8</fullName>
    </recommendedName>
    <alternativeName>
        <fullName evidence="3">30S ribosomal protein S8e</fullName>
    </alternativeName>
</protein>
<reference key="1">
    <citation type="journal article" date="2001" name="DNA Res.">
        <title>Complete genome sequence of an aerobic thermoacidophilic Crenarchaeon, Sulfolobus tokodaii strain7.</title>
        <authorList>
            <person name="Kawarabayasi Y."/>
            <person name="Hino Y."/>
            <person name="Horikawa H."/>
            <person name="Jin-no K."/>
            <person name="Takahashi M."/>
            <person name="Sekine M."/>
            <person name="Baba S."/>
            <person name="Ankai A."/>
            <person name="Kosugi H."/>
            <person name="Hosoyama A."/>
            <person name="Fukui S."/>
            <person name="Nagai Y."/>
            <person name="Nishijima K."/>
            <person name="Otsuka R."/>
            <person name="Nakazawa H."/>
            <person name="Takamiya M."/>
            <person name="Kato Y."/>
            <person name="Yoshizawa T."/>
            <person name="Tanaka T."/>
            <person name="Kudoh Y."/>
            <person name="Yamazaki J."/>
            <person name="Kushida N."/>
            <person name="Oguchi A."/>
            <person name="Aoki K."/>
            <person name="Masuda S."/>
            <person name="Yanagii M."/>
            <person name="Nishimura M."/>
            <person name="Yamagishi A."/>
            <person name="Oshima T."/>
            <person name="Kikuchi H."/>
        </authorList>
    </citation>
    <scope>NUCLEOTIDE SEQUENCE [LARGE SCALE GENOMIC DNA]</scope>
    <source>
        <strain>DSM 16993 / JCM 10545 / NBRC 100140 / 7</strain>
    </source>
</reference>
<sequence length="128" mass="14281">MGYFQGNDFRKITGGKKGKHRDKRKFELGSPPTETKLSTEELIEKERGMGGNIKIRVKYATFANIYDPQEKVSKKAKILSVIETPANKEYARRGIIVKGSIIQTELGKAKVTSRPGQDGTINAILIKE</sequence>
<dbReference type="EMBL" id="BA000023">
    <property type="protein sequence ID" value="BAB65144.1"/>
    <property type="molecule type" value="Genomic_DNA"/>
</dbReference>
<dbReference type="RefSeq" id="WP_010978126.1">
    <property type="nucleotide sequence ID" value="NC_003106.2"/>
</dbReference>
<dbReference type="SMR" id="Q976K3"/>
<dbReference type="STRING" id="273063.STK_01880"/>
<dbReference type="KEGG" id="sto:STK_01880"/>
<dbReference type="PATRIC" id="fig|273063.9.peg.231"/>
<dbReference type="eggNOG" id="arCOG04154">
    <property type="taxonomic scope" value="Archaea"/>
</dbReference>
<dbReference type="OrthoDB" id="372305at2157"/>
<dbReference type="Proteomes" id="UP000001015">
    <property type="component" value="Chromosome"/>
</dbReference>
<dbReference type="GO" id="GO:1990904">
    <property type="term" value="C:ribonucleoprotein complex"/>
    <property type="evidence" value="ECO:0007669"/>
    <property type="project" value="UniProtKB-KW"/>
</dbReference>
<dbReference type="GO" id="GO:0005840">
    <property type="term" value="C:ribosome"/>
    <property type="evidence" value="ECO:0007669"/>
    <property type="project" value="UniProtKB-KW"/>
</dbReference>
<dbReference type="GO" id="GO:0003735">
    <property type="term" value="F:structural constituent of ribosome"/>
    <property type="evidence" value="ECO:0007669"/>
    <property type="project" value="InterPro"/>
</dbReference>
<dbReference type="GO" id="GO:0006412">
    <property type="term" value="P:translation"/>
    <property type="evidence" value="ECO:0007669"/>
    <property type="project" value="UniProtKB-UniRule"/>
</dbReference>
<dbReference type="CDD" id="cd11382">
    <property type="entry name" value="Ribosomal_S8e"/>
    <property type="match status" value="1"/>
</dbReference>
<dbReference type="FunFam" id="2.40.10.310:FF:000002">
    <property type="entry name" value="30S ribosomal protein S8e"/>
    <property type="match status" value="1"/>
</dbReference>
<dbReference type="Gene3D" id="2.40.10.310">
    <property type="match status" value="1"/>
</dbReference>
<dbReference type="HAMAP" id="MF_00029">
    <property type="entry name" value="Ribosomal_eS8"/>
    <property type="match status" value="1"/>
</dbReference>
<dbReference type="InterPro" id="IPR001047">
    <property type="entry name" value="Ribosomal_eS8"/>
</dbReference>
<dbReference type="InterPro" id="IPR018283">
    <property type="entry name" value="Ribosomal_eS8_CS"/>
</dbReference>
<dbReference type="InterPro" id="IPR020919">
    <property type="entry name" value="Ribosomal_protein_eS8_arc"/>
</dbReference>
<dbReference type="InterPro" id="IPR022309">
    <property type="entry name" value="Ribosomal_Se8/biogenesis_NSA2"/>
</dbReference>
<dbReference type="NCBIfam" id="TIGR00307">
    <property type="entry name" value="eS8"/>
    <property type="match status" value="1"/>
</dbReference>
<dbReference type="PANTHER" id="PTHR10394">
    <property type="entry name" value="40S RIBOSOMAL PROTEIN S8"/>
    <property type="match status" value="1"/>
</dbReference>
<dbReference type="Pfam" id="PF01201">
    <property type="entry name" value="Ribosomal_S8e"/>
    <property type="match status" value="1"/>
</dbReference>
<dbReference type="PROSITE" id="PS01193">
    <property type="entry name" value="RIBOSOMAL_S8E"/>
    <property type="match status" value="1"/>
</dbReference>
<comment type="subunit">
    <text evidence="1">Part of the 30S ribosomal subunit.</text>
</comment>
<comment type="similarity">
    <text evidence="1">Belongs to the eukaryotic ribosomal protein eS8 family.</text>
</comment>
<accession>Q976K3</accession>
<gene>
    <name evidence="1" type="primary">rps8e</name>
    <name type="ordered locus">STK_01880</name>
</gene>
<evidence type="ECO:0000255" key="1">
    <source>
        <dbReference type="HAMAP-Rule" id="MF_00029"/>
    </source>
</evidence>
<evidence type="ECO:0000256" key="2">
    <source>
        <dbReference type="SAM" id="MobiDB-lite"/>
    </source>
</evidence>
<evidence type="ECO:0000305" key="3"/>
<organism>
    <name type="scientific">Sulfurisphaera tokodaii (strain DSM 16993 / JCM 10545 / NBRC 100140 / 7)</name>
    <name type="common">Sulfolobus tokodaii</name>
    <dbReference type="NCBI Taxonomy" id="273063"/>
    <lineage>
        <taxon>Archaea</taxon>
        <taxon>Thermoproteota</taxon>
        <taxon>Thermoprotei</taxon>
        <taxon>Sulfolobales</taxon>
        <taxon>Sulfolobaceae</taxon>
        <taxon>Sulfurisphaera</taxon>
    </lineage>
</organism>